<proteinExistence type="predicted"/>
<sequence>MYNPFHLHPGVEVYIDLGALPTMIEVLSVEVYGGFNAVAAPLEVCLDFLNGYRSRFPALYVCGNSSKALDGIRGNFRVRRGFTIHQLIEILLNAYQDMIFIEHDALLFEDCDFHTLEDFVMLLRQIGRDRTVVYFTTNRDRIFDFLTTLADRYILVEAEEGGYFIAEVDEKGINQRFYPKMVGQLTLEVF</sequence>
<accession>O29564</accession>
<gene>
    <name type="ordered locus">AF_0694</name>
</gene>
<keyword id="KW-1185">Reference proteome</keyword>
<name>Y694_ARCFU</name>
<feature type="chain" id="PRO_0000127908" description="Uncharacterized protein AF_0694">
    <location>
        <begin position="1"/>
        <end position="190"/>
    </location>
</feature>
<protein>
    <recommendedName>
        <fullName>Uncharacterized protein AF_0694</fullName>
    </recommendedName>
</protein>
<reference key="1">
    <citation type="journal article" date="1997" name="Nature">
        <title>The complete genome sequence of the hyperthermophilic, sulphate-reducing archaeon Archaeoglobus fulgidus.</title>
        <authorList>
            <person name="Klenk H.-P."/>
            <person name="Clayton R.A."/>
            <person name="Tomb J.-F."/>
            <person name="White O."/>
            <person name="Nelson K.E."/>
            <person name="Ketchum K.A."/>
            <person name="Dodson R.J."/>
            <person name="Gwinn M.L."/>
            <person name="Hickey E.K."/>
            <person name="Peterson J.D."/>
            <person name="Richardson D.L."/>
            <person name="Kerlavage A.R."/>
            <person name="Graham D.E."/>
            <person name="Kyrpides N.C."/>
            <person name="Fleischmann R.D."/>
            <person name="Quackenbush J."/>
            <person name="Lee N.H."/>
            <person name="Sutton G.G."/>
            <person name="Gill S.R."/>
            <person name="Kirkness E.F."/>
            <person name="Dougherty B.A."/>
            <person name="McKenney K."/>
            <person name="Adams M.D."/>
            <person name="Loftus B.J."/>
            <person name="Peterson S.N."/>
            <person name="Reich C.I."/>
            <person name="McNeil L.K."/>
            <person name="Badger J.H."/>
            <person name="Glodek A."/>
            <person name="Zhou L."/>
            <person name="Overbeek R."/>
            <person name="Gocayne J.D."/>
            <person name="Weidman J.F."/>
            <person name="McDonald L.A."/>
            <person name="Utterback T.R."/>
            <person name="Cotton M.D."/>
            <person name="Spriggs T."/>
            <person name="Artiach P."/>
            <person name="Kaine B.P."/>
            <person name="Sykes S.M."/>
            <person name="Sadow P.W."/>
            <person name="D'Andrea K.P."/>
            <person name="Bowman C."/>
            <person name="Fujii C."/>
            <person name="Garland S.A."/>
            <person name="Mason T.M."/>
            <person name="Olsen G.J."/>
            <person name="Fraser C.M."/>
            <person name="Smith H.O."/>
            <person name="Woese C.R."/>
            <person name="Venter J.C."/>
        </authorList>
    </citation>
    <scope>NUCLEOTIDE SEQUENCE [LARGE SCALE GENOMIC DNA]</scope>
    <source>
        <strain>ATCC 49558 / DSM 4304 / JCM 9628 / NBRC 100126 / VC-16</strain>
    </source>
</reference>
<dbReference type="EMBL" id="AE000782">
    <property type="protein sequence ID" value="AAB90548.1"/>
    <property type="molecule type" value="Genomic_DNA"/>
</dbReference>
<dbReference type="PIR" id="F69336">
    <property type="entry name" value="F69336"/>
</dbReference>
<dbReference type="STRING" id="224325.AF_0694"/>
<dbReference type="PaxDb" id="224325-AF_0694"/>
<dbReference type="EnsemblBacteria" id="AAB90548">
    <property type="protein sequence ID" value="AAB90548"/>
    <property type="gene ID" value="AF_0694"/>
</dbReference>
<dbReference type="KEGG" id="afu:AF_0694"/>
<dbReference type="eggNOG" id="arCOG07763">
    <property type="taxonomic scope" value="Archaea"/>
</dbReference>
<dbReference type="HOGENOM" id="CLU_1582823_0_0_2"/>
<dbReference type="Proteomes" id="UP000002199">
    <property type="component" value="Chromosome"/>
</dbReference>
<organism>
    <name type="scientific">Archaeoglobus fulgidus (strain ATCC 49558 / DSM 4304 / JCM 9628 / NBRC 100126 / VC-16)</name>
    <dbReference type="NCBI Taxonomy" id="224325"/>
    <lineage>
        <taxon>Archaea</taxon>
        <taxon>Methanobacteriati</taxon>
        <taxon>Methanobacteriota</taxon>
        <taxon>Archaeoglobi</taxon>
        <taxon>Archaeoglobales</taxon>
        <taxon>Archaeoglobaceae</taxon>
        <taxon>Archaeoglobus</taxon>
    </lineage>
</organism>